<comment type="similarity">
    <text evidence="3">Belongs to the DNA glycosylase family.</text>
</comment>
<comment type="sequence caution" evidence="3">
    <conflict type="erroneous gene model prediction">
        <sequence resource="EMBL-CDS" id="CAB41866"/>
    </conflict>
    <text>The predicted gene At3g47830 has been split into 2 genes: At3g47830 and At3g47833.</text>
</comment>
<name>DG783_ARATH</name>
<organism>
    <name type="scientific">Arabidopsis thaliana</name>
    <name type="common">Mouse-ear cress</name>
    <dbReference type="NCBI Taxonomy" id="3702"/>
    <lineage>
        <taxon>Eukaryota</taxon>
        <taxon>Viridiplantae</taxon>
        <taxon>Streptophyta</taxon>
        <taxon>Embryophyta</taxon>
        <taxon>Tracheophyta</taxon>
        <taxon>Spermatophyta</taxon>
        <taxon>Magnoliopsida</taxon>
        <taxon>eudicotyledons</taxon>
        <taxon>Gunneridae</taxon>
        <taxon>Pentapetalae</taxon>
        <taxon>rosids</taxon>
        <taxon>malvids</taxon>
        <taxon>Brassicales</taxon>
        <taxon>Brassicaceae</taxon>
        <taxon>Camelineae</taxon>
        <taxon>Arabidopsis</taxon>
    </lineage>
</organism>
<reference key="1">
    <citation type="journal article" date="2000" name="Nature">
        <title>Sequence and analysis of chromosome 3 of the plant Arabidopsis thaliana.</title>
        <authorList>
            <person name="Salanoubat M."/>
            <person name="Lemcke K."/>
            <person name="Rieger M."/>
            <person name="Ansorge W."/>
            <person name="Unseld M."/>
            <person name="Fartmann B."/>
            <person name="Valle G."/>
            <person name="Bloecker H."/>
            <person name="Perez-Alonso M."/>
            <person name="Obermaier B."/>
            <person name="Delseny M."/>
            <person name="Boutry M."/>
            <person name="Grivell L.A."/>
            <person name="Mache R."/>
            <person name="Puigdomenech P."/>
            <person name="De Simone V."/>
            <person name="Choisne N."/>
            <person name="Artiguenave F."/>
            <person name="Robert C."/>
            <person name="Brottier P."/>
            <person name="Wincker P."/>
            <person name="Cattolico L."/>
            <person name="Weissenbach J."/>
            <person name="Saurin W."/>
            <person name="Quetier F."/>
            <person name="Schaefer M."/>
            <person name="Mueller-Auer S."/>
            <person name="Gabel C."/>
            <person name="Fuchs M."/>
            <person name="Benes V."/>
            <person name="Wurmbach E."/>
            <person name="Drzonek H."/>
            <person name="Erfle H."/>
            <person name="Jordan N."/>
            <person name="Bangert S."/>
            <person name="Wiedelmann R."/>
            <person name="Kranz H."/>
            <person name="Voss H."/>
            <person name="Holland R."/>
            <person name="Brandt P."/>
            <person name="Nyakatura G."/>
            <person name="Vezzi A."/>
            <person name="D'Angelo M."/>
            <person name="Pallavicini A."/>
            <person name="Toppo S."/>
            <person name="Simionati B."/>
            <person name="Conrad A."/>
            <person name="Hornischer K."/>
            <person name="Kauer G."/>
            <person name="Loehnert T.-H."/>
            <person name="Nordsiek G."/>
            <person name="Reichelt J."/>
            <person name="Scharfe M."/>
            <person name="Schoen O."/>
            <person name="Bargues M."/>
            <person name="Terol J."/>
            <person name="Climent J."/>
            <person name="Navarro P."/>
            <person name="Collado C."/>
            <person name="Perez-Perez A."/>
            <person name="Ottenwaelder B."/>
            <person name="Duchemin D."/>
            <person name="Cooke R."/>
            <person name="Laudie M."/>
            <person name="Berger-Llauro C."/>
            <person name="Purnelle B."/>
            <person name="Masuy D."/>
            <person name="de Haan M."/>
            <person name="Maarse A.C."/>
            <person name="Alcaraz J.-P."/>
            <person name="Cottet A."/>
            <person name="Casacuberta E."/>
            <person name="Monfort A."/>
            <person name="Argiriou A."/>
            <person name="Flores M."/>
            <person name="Liguori R."/>
            <person name="Vitale D."/>
            <person name="Mannhaupt G."/>
            <person name="Haase D."/>
            <person name="Schoof H."/>
            <person name="Rudd S."/>
            <person name="Zaccaria P."/>
            <person name="Mewes H.-W."/>
            <person name="Mayer K.F.X."/>
            <person name="Kaul S."/>
            <person name="Town C.D."/>
            <person name="Koo H.L."/>
            <person name="Tallon L.J."/>
            <person name="Jenkins J."/>
            <person name="Rooney T."/>
            <person name="Rizzo M."/>
            <person name="Walts A."/>
            <person name="Utterback T."/>
            <person name="Fujii C.Y."/>
            <person name="Shea T.P."/>
            <person name="Creasy T.H."/>
            <person name="Haas B."/>
            <person name="Maiti R."/>
            <person name="Wu D."/>
            <person name="Peterson J."/>
            <person name="Van Aken S."/>
            <person name="Pai G."/>
            <person name="Militscher J."/>
            <person name="Sellers P."/>
            <person name="Gill J.E."/>
            <person name="Feldblyum T.V."/>
            <person name="Preuss D."/>
            <person name="Lin X."/>
            <person name="Nierman W.C."/>
            <person name="Salzberg S.L."/>
            <person name="White O."/>
            <person name="Venter J.C."/>
            <person name="Fraser C.M."/>
            <person name="Kaneko T."/>
            <person name="Nakamura Y."/>
            <person name="Sato S."/>
            <person name="Kato T."/>
            <person name="Asamizu E."/>
            <person name="Sasamoto S."/>
            <person name="Kimura T."/>
            <person name="Idesawa K."/>
            <person name="Kawashima K."/>
            <person name="Kishida Y."/>
            <person name="Kiyokawa C."/>
            <person name="Kohara M."/>
            <person name="Matsumoto M."/>
            <person name="Matsuno A."/>
            <person name="Muraki A."/>
            <person name="Nakayama S."/>
            <person name="Nakazaki N."/>
            <person name="Shinpo S."/>
            <person name="Takeuchi C."/>
            <person name="Wada T."/>
            <person name="Watanabe A."/>
            <person name="Yamada M."/>
            <person name="Yasuda M."/>
            <person name="Tabata S."/>
        </authorList>
    </citation>
    <scope>NUCLEOTIDE SEQUENCE [LARGE SCALE GENOMIC DNA]</scope>
    <source>
        <strain>cv. Columbia</strain>
    </source>
</reference>
<reference key="2">
    <citation type="journal article" date="2017" name="Plant J.">
        <title>Araport11: a complete reannotation of the Arabidopsis thaliana reference genome.</title>
        <authorList>
            <person name="Cheng C.Y."/>
            <person name="Krishnakumar V."/>
            <person name="Chan A.P."/>
            <person name="Thibaud-Nissen F."/>
            <person name="Schobel S."/>
            <person name="Town C.D."/>
        </authorList>
    </citation>
    <scope>GENOME REANNOTATION</scope>
    <source>
        <strain>cv. Columbia</strain>
    </source>
</reference>
<sequence>MSKAQKRKRLNKYDGESKTPANKSTVDGGNPYPTLLRPTAEECRDVRDALLSLHGFPPEFANYRRQRLRSFSAVDDHDTQCNLKSETLNETEEESVLDGLVKILLSQNTTESNSQRAFASLKATFPKWDDVLNAESKSIENAIRCGGLAPKKAVCIKNILNRLQNERGRLCLEYLRGLSVEEVKTELSHFKGVGPKTVSCVLMFNLQHNDFPVDTHVFEIAKALGWVPKTADRNKTYVHLNRKIPDELKFDLNCLLYTHGKICSNCKKNVAKPKAKVASPDDCPLVGFYDLIV</sequence>
<accession>F4JCQ3</accession>
<accession>Q9STT0</accession>
<feature type="chain" id="PRO_0000431761" description="Putative DNA glycosylase At3g47830">
    <location>
        <begin position="1"/>
        <end position="293"/>
    </location>
</feature>
<feature type="region of interest" description="Disordered" evidence="2">
    <location>
        <begin position="1"/>
        <end position="34"/>
    </location>
</feature>
<feature type="compositionally biased region" description="Basic residues" evidence="2">
    <location>
        <begin position="1"/>
        <end position="10"/>
    </location>
</feature>
<feature type="active site" description="Schiff-base intermediate with DNA" evidence="1">
    <location>
        <position position="196"/>
    </location>
</feature>
<feature type="binding site" evidence="1">
    <location>
        <position position="108"/>
    </location>
    <ligand>
        <name>DNA</name>
        <dbReference type="ChEBI" id="CHEBI:16991"/>
    </ligand>
</feature>
<feature type="binding site" evidence="1">
    <location>
        <position position="151"/>
    </location>
    <ligand>
        <name>DNA</name>
        <dbReference type="ChEBI" id="CHEBI:16991"/>
    </ligand>
</feature>
<feature type="binding site" evidence="1">
    <location>
        <position position="216"/>
    </location>
    <ligand>
        <name>DNA</name>
        <dbReference type="ChEBI" id="CHEBI:16991"/>
    </ligand>
</feature>
<feature type="binding site" evidence="1">
    <location>
        <position position="232"/>
    </location>
    <ligand>
        <name>DNA</name>
        <dbReference type="ChEBI" id="CHEBI:16991"/>
    </ligand>
</feature>
<proteinExistence type="inferred from homology"/>
<keyword id="KW-0326">Glycosidase</keyword>
<keyword id="KW-0378">Hydrolase</keyword>
<keyword id="KW-1185">Reference proteome</keyword>
<evidence type="ECO:0000250" key="1">
    <source>
        <dbReference type="UniProtKB" id="O15527"/>
    </source>
</evidence>
<evidence type="ECO:0000256" key="2">
    <source>
        <dbReference type="SAM" id="MobiDB-lite"/>
    </source>
</evidence>
<evidence type="ECO:0000305" key="3"/>
<evidence type="ECO:0000312" key="4">
    <source>
        <dbReference type="Araport" id="AT3G47830"/>
    </source>
</evidence>
<evidence type="ECO:0000312" key="5">
    <source>
        <dbReference type="EMBL" id="CAB41866.1"/>
    </source>
</evidence>
<gene>
    <name evidence="4" type="ordered locus">At3g47830</name>
    <name evidence="5" type="ORF">T23J7.160</name>
</gene>
<protein>
    <recommendedName>
        <fullName evidence="3">Putative DNA glycosylase At3g47830</fullName>
        <ecNumber evidence="3">3.2.2.-</ecNumber>
    </recommendedName>
</protein>
<dbReference type="EC" id="3.2.2.-" evidence="3"/>
<dbReference type="EMBL" id="AL049746">
    <property type="protein sequence ID" value="CAB41866.1"/>
    <property type="status" value="ALT_SEQ"/>
    <property type="molecule type" value="Genomic_DNA"/>
</dbReference>
<dbReference type="EMBL" id="CP002686">
    <property type="protein sequence ID" value="AEE78335.1"/>
    <property type="molecule type" value="Genomic_DNA"/>
</dbReference>
<dbReference type="PIR" id="T07722">
    <property type="entry name" value="T07722"/>
</dbReference>
<dbReference type="RefSeq" id="NP_566893.1">
    <property type="nucleotide sequence ID" value="NM_114651.2"/>
</dbReference>
<dbReference type="SMR" id="F4JCQ3"/>
<dbReference type="FunCoup" id="F4JCQ3">
    <property type="interactions" value="7"/>
</dbReference>
<dbReference type="STRING" id="3702.F4JCQ3"/>
<dbReference type="PaxDb" id="3702-AT3G47830.1"/>
<dbReference type="ProteomicsDB" id="224211"/>
<dbReference type="EnsemblPlants" id="AT3G47830.1">
    <property type="protein sequence ID" value="AT3G47830.1"/>
    <property type="gene ID" value="AT3G47830"/>
</dbReference>
<dbReference type="GeneID" id="823937"/>
<dbReference type="Gramene" id="AT3G47830.1">
    <property type="protein sequence ID" value="AT3G47830.1"/>
    <property type="gene ID" value="AT3G47830"/>
</dbReference>
<dbReference type="KEGG" id="ath:AT3G47830"/>
<dbReference type="Araport" id="AT3G47830"/>
<dbReference type="TAIR" id="AT3G47830"/>
<dbReference type="eggNOG" id="ENOG502QRUG">
    <property type="taxonomic scope" value="Eukaryota"/>
</dbReference>
<dbReference type="HOGENOM" id="CLU_012862_9_1_1"/>
<dbReference type="InParanoid" id="F4JCQ3"/>
<dbReference type="OMA" id="LHVLMVG"/>
<dbReference type="OrthoDB" id="5607at2759"/>
<dbReference type="PRO" id="PR:F4JCQ3"/>
<dbReference type="Proteomes" id="UP000006548">
    <property type="component" value="Chromosome 3"/>
</dbReference>
<dbReference type="ExpressionAtlas" id="F4JCQ3">
    <property type="expression patterns" value="baseline and differential"/>
</dbReference>
<dbReference type="GO" id="GO:0140097">
    <property type="term" value="F:catalytic activity, acting on DNA"/>
    <property type="evidence" value="ECO:0007669"/>
    <property type="project" value="UniProtKB-ARBA"/>
</dbReference>
<dbReference type="GO" id="GO:0016798">
    <property type="term" value="F:hydrolase activity, acting on glycosyl bonds"/>
    <property type="evidence" value="ECO:0007669"/>
    <property type="project" value="UniProtKB-KW"/>
</dbReference>
<dbReference type="GO" id="GO:0006284">
    <property type="term" value="P:base-excision repair"/>
    <property type="evidence" value="ECO:0007669"/>
    <property type="project" value="InterPro"/>
</dbReference>
<dbReference type="CDD" id="cd00056">
    <property type="entry name" value="ENDO3c"/>
    <property type="match status" value="1"/>
</dbReference>
<dbReference type="Gene3D" id="1.10.1670.10">
    <property type="entry name" value="Helix-hairpin-Helix base-excision DNA repair enzymes (C-terminal)"/>
    <property type="match status" value="1"/>
</dbReference>
<dbReference type="Gene3D" id="1.10.340.30">
    <property type="entry name" value="Hypothetical protein, domain 2"/>
    <property type="match status" value="1"/>
</dbReference>
<dbReference type="InterPro" id="IPR011257">
    <property type="entry name" value="DNA_glycosylase"/>
</dbReference>
<dbReference type="InterPro" id="IPR003265">
    <property type="entry name" value="HhH-GPD_domain"/>
</dbReference>
<dbReference type="InterPro" id="IPR023170">
    <property type="entry name" value="HhH_base_excis_C"/>
</dbReference>
<dbReference type="PANTHER" id="PTHR47203">
    <property type="match status" value="1"/>
</dbReference>
<dbReference type="PANTHER" id="PTHR47203:SF1">
    <property type="entry name" value="HYPOTHETICAL BASE EXCISION DNA REPAIR PROTEIN (EUROFUNG)"/>
    <property type="match status" value="1"/>
</dbReference>
<dbReference type="Pfam" id="PF00730">
    <property type="entry name" value="HhH-GPD"/>
    <property type="match status" value="1"/>
</dbReference>
<dbReference type="SMART" id="SM00478">
    <property type="entry name" value="ENDO3c"/>
    <property type="match status" value="1"/>
</dbReference>
<dbReference type="SUPFAM" id="SSF48150">
    <property type="entry name" value="DNA-glycosylase"/>
    <property type="match status" value="1"/>
</dbReference>